<keyword id="KW-0002">3D-structure</keyword>
<keyword id="KW-0058">Aromatic hydrocarbons catabolism</keyword>
<keyword id="KW-0223">Dioxygenase</keyword>
<keyword id="KW-0408">Iron</keyword>
<keyword id="KW-0479">Metal-binding</keyword>
<keyword id="KW-0560">Oxidoreductase</keyword>
<keyword id="KW-0614">Plasmid</keyword>
<accession>P11451</accession>
<name>CLCA_PSEPU</name>
<feature type="chain" id="PRO_0000085087" description="Chlorocatechol 1,2-dioxygenase">
    <location>
        <begin position="1"/>
        <end position="260"/>
    </location>
</feature>
<feature type="binding site" evidence="1">
    <location>
        <position position="130"/>
    </location>
    <ligand>
        <name>Fe cation</name>
        <dbReference type="ChEBI" id="CHEBI:24875"/>
    </ligand>
</feature>
<feature type="binding site" evidence="1">
    <location>
        <position position="164"/>
    </location>
    <ligand>
        <name>Fe cation</name>
        <dbReference type="ChEBI" id="CHEBI:24875"/>
    </ligand>
</feature>
<feature type="binding site" evidence="1">
    <location>
        <position position="188"/>
    </location>
    <ligand>
        <name>Fe cation</name>
        <dbReference type="ChEBI" id="CHEBI:24875"/>
    </ligand>
</feature>
<feature type="binding site" evidence="1">
    <location>
        <position position="190"/>
    </location>
    <ligand>
        <name>Fe cation</name>
        <dbReference type="ChEBI" id="CHEBI:24875"/>
    </ligand>
</feature>
<feature type="sequence conflict" description="In Ref. 2; AAA98294." evidence="2" ref="2">
    <original>A</original>
    <variation>P</variation>
    <location>
        <position position="187"/>
    </location>
</feature>
<feature type="helix" evidence="3">
    <location>
        <begin position="3"/>
        <end position="22"/>
    </location>
</feature>
<feature type="helix" evidence="3">
    <location>
        <begin position="27"/>
        <end position="42"/>
    </location>
</feature>
<feature type="helix" evidence="3">
    <location>
        <begin position="46"/>
        <end position="53"/>
    </location>
</feature>
<feature type="helix" evidence="3">
    <location>
        <begin position="55"/>
        <end position="62"/>
    </location>
</feature>
<feature type="strand" evidence="3">
    <location>
        <begin position="86"/>
        <end position="88"/>
    </location>
</feature>
<feature type="strand" evidence="3">
    <location>
        <begin position="99"/>
        <end position="108"/>
    </location>
</feature>
<feature type="strand" evidence="3">
    <location>
        <begin position="118"/>
        <end position="122"/>
    </location>
</feature>
<feature type="turn" evidence="3">
    <location>
        <begin position="131"/>
        <end position="133"/>
    </location>
</feature>
<feature type="strand" evidence="3">
    <location>
        <begin position="143"/>
        <end position="147"/>
    </location>
</feature>
<feature type="strand" evidence="3">
    <location>
        <begin position="152"/>
        <end position="159"/>
    </location>
</feature>
<feature type="helix" evidence="3">
    <location>
        <begin position="171"/>
        <end position="178"/>
    </location>
</feature>
<feature type="strand" evidence="3">
    <location>
        <begin position="183"/>
        <end position="185"/>
    </location>
</feature>
<feature type="strand" evidence="3">
    <location>
        <begin position="188"/>
        <end position="194"/>
    </location>
</feature>
<feature type="strand" evidence="3">
    <location>
        <begin position="201"/>
        <end position="207"/>
    </location>
</feature>
<feature type="strand" evidence="3">
    <location>
        <begin position="217"/>
        <end position="219"/>
    </location>
</feature>
<feature type="helix" evidence="3">
    <location>
        <begin position="223"/>
        <end position="225"/>
    </location>
</feature>
<feature type="strand" evidence="3">
    <location>
        <begin position="231"/>
        <end position="234"/>
    </location>
</feature>
<feature type="strand" evidence="3">
    <location>
        <begin position="236"/>
        <end position="244"/>
    </location>
</feature>
<sequence>MDKRVAEVAGAIVEAVRKILLDKRVTEAEYRAGVDYLTEVAQTRETALLLDVFLNSTIIEGKAQRSRTSAPAIQGPYFLEGAPVVEGVLKTYDTDDHKPLIIRGTVRSDTGELLAGAVIDVWHSTPDGLYSGIHDNIPVDYYRGKLVTDSQGNYRVRTTMPVPYQIPYEGPTGRLLGHLGSHTWRPAHVHFKVRKDGFEPLTTQYYFEGGKWVDDDCCHGVTPDLITPETIEDGVRVMTLDFVIEREQAEQRKSATETVA</sequence>
<evidence type="ECO:0000250" key="1"/>
<evidence type="ECO:0000305" key="2"/>
<evidence type="ECO:0007829" key="3">
    <source>
        <dbReference type="PDB" id="3TH1"/>
    </source>
</evidence>
<protein>
    <recommendedName>
        <fullName>Chlorocatechol 1,2-dioxygenase</fullName>
        <ecNumber>1.13.11.-</ecNumber>
    </recommendedName>
</protein>
<gene>
    <name type="primary">clcA</name>
</gene>
<reference key="1">
    <citation type="journal article" date="1987" name="Proc. Natl. Acad. Sci. U.S.A.">
        <title>Organization and nucleotide sequence determination of a gene cluster involved in 3-chlorocatechol degradation.</title>
        <authorList>
            <person name="Frantz B."/>
            <person name="Chakrabarty A.M."/>
        </authorList>
    </citation>
    <scope>NUCLEOTIDE SEQUENCE [GENOMIC DNA]</scope>
</reference>
<reference key="2">
    <citation type="journal article" date="1988" name="Mol. Gen. Genet.">
        <title>Nucleotide homology and organization of chlorocatechol oxidation genes of plasmids pJP4 and pAC27.</title>
        <authorList>
            <person name="Ghosal D."/>
            <person name="You I.-S."/>
        </authorList>
    </citation>
    <scope>NUCLEOTIDE SEQUENCE [GENOMIC DNA]</scope>
</reference>
<geneLocation type="plasmid">
    <name>pAC27</name>
</geneLocation>
<proteinExistence type="evidence at protein level"/>
<organism>
    <name type="scientific">Pseudomonas putida</name>
    <name type="common">Arthrobacter siderocapsulatus</name>
    <dbReference type="NCBI Taxonomy" id="303"/>
    <lineage>
        <taxon>Bacteria</taxon>
        <taxon>Pseudomonadati</taxon>
        <taxon>Pseudomonadota</taxon>
        <taxon>Gammaproteobacteria</taxon>
        <taxon>Pseudomonadales</taxon>
        <taxon>Pseudomonadaceae</taxon>
        <taxon>Pseudomonas</taxon>
    </lineage>
</organism>
<comment type="function">
    <text>Preferentially converts 3-chlorocatechol and 3,5-dichlorocatechol as opposed to other chlorinated catechols. Retains diminished activity toward non-chlorinated substrates.</text>
</comment>
<comment type="catalytic activity">
    <reaction>
        <text>3-chlorocatechol + O2 = (2E,4Z)-2-chloromuconate + 2 H(+)</text>
        <dbReference type="Rhea" id="RHEA:48568"/>
        <dbReference type="ChEBI" id="CHEBI:15378"/>
        <dbReference type="ChEBI" id="CHEBI:15379"/>
        <dbReference type="ChEBI" id="CHEBI:19504"/>
        <dbReference type="ChEBI" id="CHEBI:27715"/>
    </reaction>
</comment>
<comment type="catalytic activity">
    <reaction>
        <text>3,5-dichlorocatechol + O2 = (2E,4E)-2,4-dichloromuconate + 2 H(+)</text>
        <dbReference type="Rhea" id="RHEA:48572"/>
        <dbReference type="ChEBI" id="CHEBI:11438"/>
        <dbReference type="ChEBI" id="CHEBI:15378"/>
        <dbReference type="ChEBI" id="CHEBI:15379"/>
        <dbReference type="ChEBI" id="CHEBI:15788"/>
    </reaction>
</comment>
<comment type="cofactor">
    <cofactor>
        <name>Fe(3+)</name>
        <dbReference type="ChEBI" id="CHEBI:29034"/>
    </cofactor>
    <text>Binds 1 Fe(3+) ion per subunit.</text>
</comment>
<comment type="pathway">
    <text>Aromatic compound metabolism; 3-chlorocatechol degradation.</text>
</comment>
<comment type="similarity">
    <text evidence="2">Belongs to the intradiol ring-cleavage dioxygenase family.</text>
</comment>
<dbReference type="EC" id="1.13.11.-"/>
<dbReference type="EMBL" id="M16964">
    <property type="protein sequence ID" value="AAA98281.1"/>
    <property type="molecule type" value="Genomic_DNA"/>
</dbReference>
<dbReference type="EMBL" id="M36279">
    <property type="protein sequence ID" value="AAA98294.1"/>
    <property type="molecule type" value="Genomic_DNA"/>
</dbReference>
<dbReference type="PIR" id="A27058">
    <property type="entry name" value="A27058"/>
</dbReference>
<dbReference type="PDB" id="3TH1">
    <property type="method" value="X-ray"/>
    <property type="resolution" value="3.40 A"/>
    <property type="chains" value="A/B/C=1-260"/>
</dbReference>
<dbReference type="PDBsum" id="3TH1"/>
<dbReference type="SMR" id="P11451"/>
<dbReference type="BioCyc" id="MetaCyc:MONOMER-14416"/>
<dbReference type="UniPathway" id="UPA00083"/>
<dbReference type="GO" id="GO:0018576">
    <property type="term" value="F:catechol 1,2-dioxygenase activity"/>
    <property type="evidence" value="ECO:0007669"/>
    <property type="project" value="InterPro"/>
</dbReference>
<dbReference type="GO" id="GO:0008199">
    <property type="term" value="F:ferric iron binding"/>
    <property type="evidence" value="ECO:0007669"/>
    <property type="project" value="InterPro"/>
</dbReference>
<dbReference type="GO" id="GO:0009056">
    <property type="term" value="P:catabolic process"/>
    <property type="evidence" value="ECO:0007669"/>
    <property type="project" value="UniProtKB-KW"/>
</dbReference>
<dbReference type="GO" id="GO:0009712">
    <property type="term" value="P:catechol-containing compound metabolic process"/>
    <property type="evidence" value="ECO:0007669"/>
    <property type="project" value="InterPro"/>
</dbReference>
<dbReference type="CDD" id="cd03462">
    <property type="entry name" value="1_2-CCD"/>
    <property type="match status" value="1"/>
</dbReference>
<dbReference type="Gene3D" id="2.60.130.10">
    <property type="entry name" value="Aromatic compound dioxygenase"/>
    <property type="match status" value="1"/>
</dbReference>
<dbReference type="InterPro" id="IPR007535">
    <property type="entry name" value="Catechol_dOase_N"/>
</dbReference>
<dbReference type="InterPro" id="IPR012817">
    <property type="entry name" value="Chlorcchol_dOase"/>
</dbReference>
<dbReference type="InterPro" id="IPR000627">
    <property type="entry name" value="Intradiol_dOase_C"/>
</dbReference>
<dbReference type="InterPro" id="IPR015889">
    <property type="entry name" value="Intradiol_dOase_core"/>
</dbReference>
<dbReference type="InterPro" id="IPR050770">
    <property type="entry name" value="Intradiol_RC_Dioxygenase"/>
</dbReference>
<dbReference type="NCBIfam" id="TIGR02465">
    <property type="entry name" value="chlorocat_1_2"/>
    <property type="match status" value="1"/>
</dbReference>
<dbReference type="PANTHER" id="PTHR33711">
    <property type="entry name" value="DIOXYGENASE, PUTATIVE (AFU_ORTHOLOGUE AFUA_2G02910)-RELATED"/>
    <property type="match status" value="1"/>
</dbReference>
<dbReference type="PANTHER" id="PTHR33711:SF7">
    <property type="entry name" value="INTRADIOL RING-CLEAVAGE DIOXYGENASES DOMAIN-CONTAINING PROTEIN-RELATED"/>
    <property type="match status" value="1"/>
</dbReference>
<dbReference type="Pfam" id="PF00775">
    <property type="entry name" value="Dioxygenase_C"/>
    <property type="match status" value="1"/>
</dbReference>
<dbReference type="Pfam" id="PF04444">
    <property type="entry name" value="Dioxygenase_N"/>
    <property type="match status" value="1"/>
</dbReference>
<dbReference type="SUPFAM" id="SSF49482">
    <property type="entry name" value="Aromatic compound dioxygenase"/>
    <property type="match status" value="1"/>
</dbReference>
<dbReference type="PROSITE" id="PS00083">
    <property type="entry name" value="INTRADIOL_DIOXYGENAS"/>
    <property type="match status" value="1"/>
</dbReference>